<organism>
    <name type="scientific">Cupriavidus necator (strain ATCC 17699 / DSM 428 / KCTC 22496 / NCIMB 10442 / H16 / Stanier 337)</name>
    <name type="common">Ralstonia eutropha</name>
    <dbReference type="NCBI Taxonomy" id="381666"/>
    <lineage>
        <taxon>Bacteria</taxon>
        <taxon>Pseudomonadati</taxon>
        <taxon>Pseudomonadota</taxon>
        <taxon>Betaproteobacteria</taxon>
        <taxon>Burkholderiales</taxon>
        <taxon>Burkholderiaceae</taxon>
        <taxon>Cupriavidus</taxon>
    </lineage>
</organism>
<reference key="1">
    <citation type="journal article" date="2006" name="Nat. Biotechnol.">
        <title>Genome sequence of the bioplastic-producing 'Knallgas' bacterium Ralstonia eutropha H16.</title>
        <authorList>
            <person name="Pohlmann A."/>
            <person name="Fricke W.F."/>
            <person name="Reinecke F."/>
            <person name="Kusian B."/>
            <person name="Liesegang H."/>
            <person name="Cramm R."/>
            <person name="Eitinger T."/>
            <person name="Ewering C."/>
            <person name="Poetter M."/>
            <person name="Schwartz E."/>
            <person name="Strittmatter A."/>
            <person name="Voss I."/>
            <person name="Gottschalk G."/>
            <person name="Steinbuechel A."/>
            <person name="Friedrich B."/>
            <person name="Bowien B."/>
        </authorList>
    </citation>
    <scope>NUCLEOTIDE SEQUENCE [LARGE SCALE GENOMIC DNA]</scope>
    <source>
        <strain>ATCC 17699 / DSM 428 / KCTC 22496 / NCIMB 10442 / H16 / Stanier 337</strain>
    </source>
</reference>
<name>QUEF_CUPNH</name>
<protein>
    <recommendedName>
        <fullName evidence="1">NADPH-dependent 7-cyano-7-deazaguanine reductase</fullName>
        <ecNumber evidence="1">1.7.1.13</ecNumber>
    </recommendedName>
    <alternativeName>
        <fullName evidence="1">7-cyano-7-carbaguanine reductase</fullName>
    </alternativeName>
    <alternativeName>
        <fullName evidence="1">NADPH-dependent nitrile oxidoreductase</fullName>
    </alternativeName>
    <alternativeName>
        <fullName evidence="1">PreQ(0) reductase</fullName>
    </alternativeName>
</protein>
<accession>Q0KEJ5</accession>
<sequence length="277" mass="31418">MSLPEHSPLGKPSAYKTEYDASLLFPIPRQPKRTEIGLPEGKPVPFFGVDIWNAYELSWLNLKGKPQVALASFIIPSDTPNIIESKSFKLYLNSFNQTRIASPEALQQLLHHDLSEATGGTVQVRLVTEADLGKQKMGELDGLLLDRLDIEVDRYEPAPELLSADQQESPVEETLVSHLLKSNCLVTGQPDWGSVQIRYVGAPINQEGLLKYLISFRNHNEFHEQCVERIFMDVMRECKPVKLAVYARYTRRGGLDINPFRTNFNTAWPDNKRNARQ</sequence>
<feature type="chain" id="PRO_1000062355" description="NADPH-dependent 7-cyano-7-deazaguanine reductase">
    <location>
        <begin position="1"/>
        <end position="277"/>
    </location>
</feature>
<feature type="active site" description="Thioimide intermediate" evidence="1">
    <location>
        <position position="184"/>
    </location>
</feature>
<feature type="active site" description="Proton donor" evidence="1">
    <location>
        <position position="191"/>
    </location>
</feature>
<feature type="binding site" evidence="1">
    <location>
        <begin position="83"/>
        <end position="85"/>
    </location>
    <ligand>
        <name>substrate</name>
    </ligand>
</feature>
<feature type="binding site" evidence="1">
    <location>
        <begin position="85"/>
        <end position="86"/>
    </location>
    <ligand>
        <name>NADPH</name>
        <dbReference type="ChEBI" id="CHEBI:57783"/>
    </ligand>
</feature>
<feature type="binding site" evidence="1">
    <location>
        <begin position="223"/>
        <end position="224"/>
    </location>
    <ligand>
        <name>substrate</name>
    </ligand>
</feature>
<feature type="binding site" evidence="1">
    <location>
        <begin position="252"/>
        <end position="253"/>
    </location>
    <ligand>
        <name>NADPH</name>
        <dbReference type="ChEBI" id="CHEBI:57783"/>
    </ligand>
</feature>
<evidence type="ECO:0000255" key="1">
    <source>
        <dbReference type="HAMAP-Rule" id="MF_00817"/>
    </source>
</evidence>
<comment type="function">
    <text evidence="1">Catalyzes the NADPH-dependent reduction of 7-cyano-7-deazaguanine (preQ0) to 7-aminomethyl-7-deazaguanine (preQ1).</text>
</comment>
<comment type="catalytic activity">
    <reaction evidence="1">
        <text>7-aminomethyl-7-carbaguanine + 2 NADP(+) = 7-cyano-7-deazaguanine + 2 NADPH + 3 H(+)</text>
        <dbReference type="Rhea" id="RHEA:13409"/>
        <dbReference type="ChEBI" id="CHEBI:15378"/>
        <dbReference type="ChEBI" id="CHEBI:45075"/>
        <dbReference type="ChEBI" id="CHEBI:57783"/>
        <dbReference type="ChEBI" id="CHEBI:58349"/>
        <dbReference type="ChEBI" id="CHEBI:58703"/>
        <dbReference type="EC" id="1.7.1.13"/>
    </reaction>
</comment>
<comment type="pathway">
    <text evidence="1">tRNA modification; tRNA-queuosine biosynthesis.</text>
</comment>
<comment type="subunit">
    <text evidence="1">Homodimer.</text>
</comment>
<comment type="subcellular location">
    <subcellularLocation>
        <location evidence="1">Cytoplasm</location>
    </subcellularLocation>
</comment>
<comment type="similarity">
    <text evidence="1">Belongs to the GTP cyclohydrolase I family. QueF type 2 subfamily.</text>
</comment>
<gene>
    <name evidence="1" type="primary">queF</name>
    <name type="ordered locus">H16_A0426</name>
</gene>
<dbReference type="EC" id="1.7.1.13" evidence="1"/>
<dbReference type="EMBL" id="AM260479">
    <property type="protein sequence ID" value="CAJ91576.1"/>
    <property type="molecule type" value="Genomic_DNA"/>
</dbReference>
<dbReference type="RefSeq" id="WP_010814426.1">
    <property type="nucleotide sequence ID" value="NZ_CP039287.1"/>
</dbReference>
<dbReference type="SMR" id="Q0KEJ5"/>
<dbReference type="STRING" id="381666.H16_A0426"/>
<dbReference type="KEGG" id="reh:H16_A0426"/>
<dbReference type="eggNOG" id="COG0780">
    <property type="taxonomic scope" value="Bacteria"/>
</dbReference>
<dbReference type="eggNOG" id="COG2904">
    <property type="taxonomic scope" value="Bacteria"/>
</dbReference>
<dbReference type="HOGENOM" id="CLU_054738_0_0_4"/>
<dbReference type="OrthoDB" id="9789995at2"/>
<dbReference type="UniPathway" id="UPA00392"/>
<dbReference type="Proteomes" id="UP000008210">
    <property type="component" value="Chromosome 1"/>
</dbReference>
<dbReference type="GO" id="GO:0005737">
    <property type="term" value="C:cytoplasm"/>
    <property type="evidence" value="ECO:0007669"/>
    <property type="project" value="UniProtKB-SubCell"/>
</dbReference>
<dbReference type="GO" id="GO:0033739">
    <property type="term" value="F:preQ1 synthase activity"/>
    <property type="evidence" value="ECO:0007669"/>
    <property type="project" value="UniProtKB-UniRule"/>
</dbReference>
<dbReference type="GO" id="GO:0008616">
    <property type="term" value="P:queuosine biosynthetic process"/>
    <property type="evidence" value="ECO:0007669"/>
    <property type="project" value="UniProtKB-UniRule"/>
</dbReference>
<dbReference type="GO" id="GO:0006400">
    <property type="term" value="P:tRNA modification"/>
    <property type="evidence" value="ECO:0007669"/>
    <property type="project" value="UniProtKB-UniRule"/>
</dbReference>
<dbReference type="Gene3D" id="3.30.1130.10">
    <property type="match status" value="2"/>
</dbReference>
<dbReference type="HAMAP" id="MF_00817">
    <property type="entry name" value="QueF_type2"/>
    <property type="match status" value="1"/>
</dbReference>
<dbReference type="InterPro" id="IPR043133">
    <property type="entry name" value="GTP-CH-I_C/QueF"/>
</dbReference>
<dbReference type="InterPro" id="IPR050084">
    <property type="entry name" value="NADPH_dep_7-cyano-7-deazaG_red"/>
</dbReference>
<dbReference type="InterPro" id="IPR029500">
    <property type="entry name" value="QueF"/>
</dbReference>
<dbReference type="InterPro" id="IPR029139">
    <property type="entry name" value="QueF_N"/>
</dbReference>
<dbReference type="InterPro" id="IPR016428">
    <property type="entry name" value="QueF_type2"/>
</dbReference>
<dbReference type="NCBIfam" id="TIGR03138">
    <property type="entry name" value="QueF"/>
    <property type="match status" value="1"/>
</dbReference>
<dbReference type="PANTHER" id="PTHR34354">
    <property type="entry name" value="NADPH-DEPENDENT 7-CYANO-7-DEAZAGUANINE REDUCTASE"/>
    <property type="match status" value="1"/>
</dbReference>
<dbReference type="PANTHER" id="PTHR34354:SF1">
    <property type="entry name" value="NADPH-DEPENDENT 7-CYANO-7-DEAZAGUANINE REDUCTASE"/>
    <property type="match status" value="1"/>
</dbReference>
<dbReference type="Pfam" id="PF14489">
    <property type="entry name" value="QueF"/>
    <property type="match status" value="1"/>
</dbReference>
<dbReference type="Pfam" id="PF14819">
    <property type="entry name" value="QueF_N"/>
    <property type="match status" value="1"/>
</dbReference>
<dbReference type="PIRSF" id="PIRSF004750">
    <property type="entry name" value="Nitrile_oxidored_YqcD_prd"/>
    <property type="match status" value="1"/>
</dbReference>
<dbReference type="SUPFAM" id="SSF55620">
    <property type="entry name" value="Tetrahydrobiopterin biosynthesis enzymes-like"/>
    <property type="match status" value="1"/>
</dbReference>
<proteinExistence type="inferred from homology"/>
<keyword id="KW-0963">Cytoplasm</keyword>
<keyword id="KW-0521">NADP</keyword>
<keyword id="KW-0560">Oxidoreductase</keyword>
<keyword id="KW-0671">Queuosine biosynthesis</keyword>
<keyword id="KW-1185">Reference proteome</keyword>